<sequence>MSIYHDEVEIEDFEYDEEEEMYYYPCPCGDRFQISKEELIEGEEVATCPSCSLVIKVIYDPEMFKAEEDEESALNEKLGDLKLEKN</sequence>
<protein>
    <recommendedName>
        <fullName evidence="3">Diphthamide biosynthesis protein 3</fullName>
    </recommendedName>
</protein>
<reference key="1">
    <citation type="journal article" date="2000" name="Science">
        <title>The genome sequence of Drosophila melanogaster.</title>
        <authorList>
            <person name="Adams M.D."/>
            <person name="Celniker S.E."/>
            <person name="Holt R.A."/>
            <person name="Evans C.A."/>
            <person name="Gocayne J.D."/>
            <person name="Amanatides P.G."/>
            <person name="Scherer S.E."/>
            <person name="Li P.W."/>
            <person name="Hoskins R.A."/>
            <person name="Galle R.F."/>
            <person name="George R.A."/>
            <person name="Lewis S.E."/>
            <person name="Richards S."/>
            <person name="Ashburner M."/>
            <person name="Henderson S.N."/>
            <person name="Sutton G.G."/>
            <person name="Wortman J.R."/>
            <person name="Yandell M.D."/>
            <person name="Zhang Q."/>
            <person name="Chen L.X."/>
            <person name="Brandon R.C."/>
            <person name="Rogers Y.-H.C."/>
            <person name="Blazej R.G."/>
            <person name="Champe M."/>
            <person name="Pfeiffer B.D."/>
            <person name="Wan K.H."/>
            <person name="Doyle C."/>
            <person name="Baxter E.G."/>
            <person name="Helt G."/>
            <person name="Nelson C.R."/>
            <person name="Miklos G.L.G."/>
            <person name="Abril J.F."/>
            <person name="Agbayani A."/>
            <person name="An H.-J."/>
            <person name="Andrews-Pfannkoch C."/>
            <person name="Baldwin D."/>
            <person name="Ballew R.M."/>
            <person name="Basu A."/>
            <person name="Baxendale J."/>
            <person name="Bayraktaroglu L."/>
            <person name="Beasley E.M."/>
            <person name="Beeson K.Y."/>
            <person name="Benos P.V."/>
            <person name="Berman B.P."/>
            <person name="Bhandari D."/>
            <person name="Bolshakov S."/>
            <person name="Borkova D."/>
            <person name="Botchan M.R."/>
            <person name="Bouck J."/>
            <person name="Brokstein P."/>
            <person name="Brottier P."/>
            <person name="Burtis K.C."/>
            <person name="Busam D.A."/>
            <person name="Butler H."/>
            <person name="Cadieu E."/>
            <person name="Center A."/>
            <person name="Chandra I."/>
            <person name="Cherry J.M."/>
            <person name="Cawley S."/>
            <person name="Dahlke C."/>
            <person name="Davenport L.B."/>
            <person name="Davies P."/>
            <person name="de Pablos B."/>
            <person name="Delcher A."/>
            <person name="Deng Z."/>
            <person name="Mays A.D."/>
            <person name="Dew I."/>
            <person name="Dietz S.M."/>
            <person name="Dodson K."/>
            <person name="Doup L.E."/>
            <person name="Downes M."/>
            <person name="Dugan-Rocha S."/>
            <person name="Dunkov B.C."/>
            <person name="Dunn P."/>
            <person name="Durbin K.J."/>
            <person name="Evangelista C.C."/>
            <person name="Ferraz C."/>
            <person name="Ferriera S."/>
            <person name="Fleischmann W."/>
            <person name="Fosler C."/>
            <person name="Gabrielian A.E."/>
            <person name="Garg N.S."/>
            <person name="Gelbart W.M."/>
            <person name="Glasser K."/>
            <person name="Glodek A."/>
            <person name="Gong F."/>
            <person name="Gorrell J.H."/>
            <person name="Gu Z."/>
            <person name="Guan P."/>
            <person name="Harris M."/>
            <person name="Harris N.L."/>
            <person name="Harvey D.A."/>
            <person name="Heiman T.J."/>
            <person name="Hernandez J.R."/>
            <person name="Houck J."/>
            <person name="Hostin D."/>
            <person name="Houston K.A."/>
            <person name="Howland T.J."/>
            <person name="Wei M.-H."/>
            <person name="Ibegwam C."/>
            <person name="Jalali M."/>
            <person name="Kalush F."/>
            <person name="Karpen G.H."/>
            <person name="Ke Z."/>
            <person name="Kennison J.A."/>
            <person name="Ketchum K.A."/>
            <person name="Kimmel B.E."/>
            <person name="Kodira C.D."/>
            <person name="Kraft C.L."/>
            <person name="Kravitz S."/>
            <person name="Kulp D."/>
            <person name="Lai Z."/>
            <person name="Lasko P."/>
            <person name="Lei Y."/>
            <person name="Levitsky A.A."/>
            <person name="Li J.H."/>
            <person name="Li Z."/>
            <person name="Liang Y."/>
            <person name="Lin X."/>
            <person name="Liu X."/>
            <person name="Mattei B."/>
            <person name="McIntosh T.C."/>
            <person name="McLeod M.P."/>
            <person name="McPherson D."/>
            <person name="Merkulov G."/>
            <person name="Milshina N.V."/>
            <person name="Mobarry C."/>
            <person name="Morris J."/>
            <person name="Moshrefi A."/>
            <person name="Mount S.M."/>
            <person name="Moy M."/>
            <person name="Murphy B."/>
            <person name="Murphy L."/>
            <person name="Muzny D.M."/>
            <person name="Nelson D.L."/>
            <person name="Nelson D.R."/>
            <person name="Nelson K.A."/>
            <person name="Nixon K."/>
            <person name="Nusskern D.R."/>
            <person name="Pacleb J.M."/>
            <person name="Palazzolo M."/>
            <person name="Pittman G.S."/>
            <person name="Pan S."/>
            <person name="Pollard J."/>
            <person name="Puri V."/>
            <person name="Reese M.G."/>
            <person name="Reinert K."/>
            <person name="Remington K."/>
            <person name="Saunders R.D.C."/>
            <person name="Scheeler F."/>
            <person name="Shen H."/>
            <person name="Shue B.C."/>
            <person name="Siden-Kiamos I."/>
            <person name="Simpson M."/>
            <person name="Skupski M.P."/>
            <person name="Smith T.J."/>
            <person name="Spier E."/>
            <person name="Spradling A.C."/>
            <person name="Stapleton M."/>
            <person name="Strong R."/>
            <person name="Sun E."/>
            <person name="Svirskas R."/>
            <person name="Tector C."/>
            <person name="Turner R."/>
            <person name="Venter E."/>
            <person name="Wang A.H."/>
            <person name="Wang X."/>
            <person name="Wang Z.-Y."/>
            <person name="Wassarman D.A."/>
            <person name="Weinstock G.M."/>
            <person name="Weissenbach J."/>
            <person name="Williams S.M."/>
            <person name="Woodage T."/>
            <person name="Worley K.C."/>
            <person name="Wu D."/>
            <person name="Yang S."/>
            <person name="Yao Q.A."/>
            <person name="Ye J."/>
            <person name="Yeh R.-F."/>
            <person name="Zaveri J.S."/>
            <person name="Zhan M."/>
            <person name="Zhang G."/>
            <person name="Zhao Q."/>
            <person name="Zheng L."/>
            <person name="Zheng X.H."/>
            <person name="Zhong F.N."/>
            <person name="Zhong W."/>
            <person name="Zhou X."/>
            <person name="Zhu S.C."/>
            <person name="Zhu X."/>
            <person name="Smith H.O."/>
            <person name="Gibbs R.A."/>
            <person name="Myers E.W."/>
            <person name="Rubin G.M."/>
            <person name="Venter J.C."/>
        </authorList>
    </citation>
    <scope>NUCLEOTIDE SEQUENCE [LARGE SCALE GENOMIC DNA]</scope>
    <source>
        <strain>Berkeley</strain>
    </source>
</reference>
<reference key="2">
    <citation type="journal article" date="2002" name="Genome Biol.">
        <title>Annotation of the Drosophila melanogaster euchromatic genome: a systematic review.</title>
        <authorList>
            <person name="Misra S."/>
            <person name="Crosby M.A."/>
            <person name="Mungall C.J."/>
            <person name="Matthews B.B."/>
            <person name="Campbell K.S."/>
            <person name="Hradecky P."/>
            <person name="Huang Y."/>
            <person name="Kaminker J.S."/>
            <person name="Millburn G.H."/>
            <person name="Prochnik S.E."/>
            <person name="Smith C.D."/>
            <person name="Tupy J.L."/>
            <person name="Whitfield E.J."/>
            <person name="Bayraktaroglu L."/>
            <person name="Berman B.P."/>
            <person name="Bettencourt B.R."/>
            <person name="Celniker S.E."/>
            <person name="de Grey A.D.N.J."/>
            <person name="Drysdale R.A."/>
            <person name="Harris N.L."/>
            <person name="Richter J."/>
            <person name="Russo S."/>
            <person name="Schroeder A.J."/>
            <person name="Shu S.Q."/>
            <person name="Stapleton M."/>
            <person name="Yamada C."/>
            <person name="Ashburner M."/>
            <person name="Gelbart W.M."/>
            <person name="Rubin G.M."/>
            <person name="Lewis S.E."/>
        </authorList>
    </citation>
    <scope>GENOME REANNOTATION</scope>
    <source>
        <strain>Berkeley</strain>
    </source>
</reference>
<reference key="3">
    <citation type="submission" date="2005-06" db="EMBL/GenBank/DDBJ databases">
        <authorList>
            <person name="Stapleton M."/>
            <person name="Carlson J.W."/>
            <person name="Chavez C."/>
            <person name="Frise E."/>
            <person name="George R.A."/>
            <person name="Pacleb J.M."/>
            <person name="Park S."/>
            <person name="Wan K.H."/>
            <person name="Yu C."/>
            <person name="Celniker S.E."/>
        </authorList>
    </citation>
    <scope>NUCLEOTIDE SEQUENCE [LARGE SCALE MRNA]</scope>
    <source>
        <strain>Berkeley</strain>
    </source>
</reference>
<feature type="chain" id="PRO_0000082625" description="Diphthamide biosynthesis protein 3">
    <location>
        <begin position="1"/>
        <end position="86"/>
    </location>
</feature>
<feature type="domain" description="DPH-type MB" evidence="2">
    <location>
        <begin position="4"/>
        <end position="60"/>
    </location>
</feature>
<feature type="binding site" evidence="1">
    <location>
        <position position="26"/>
    </location>
    <ligand>
        <name>Fe cation</name>
        <dbReference type="ChEBI" id="CHEBI:24875"/>
    </ligand>
</feature>
<feature type="binding site" evidence="1">
    <location>
        <position position="28"/>
    </location>
    <ligand>
        <name>Fe cation</name>
        <dbReference type="ChEBI" id="CHEBI:24875"/>
    </ligand>
</feature>
<feature type="binding site" evidence="1">
    <location>
        <position position="48"/>
    </location>
    <ligand>
        <name>Fe cation</name>
        <dbReference type="ChEBI" id="CHEBI:24875"/>
    </ligand>
</feature>
<feature type="binding site" evidence="1">
    <location>
        <position position="51"/>
    </location>
    <ligand>
        <name>Fe cation</name>
        <dbReference type="ChEBI" id="CHEBI:24875"/>
    </ligand>
</feature>
<keyword id="KW-0408">Iron</keyword>
<keyword id="KW-0479">Metal-binding</keyword>
<keyword id="KW-0560">Oxidoreductase</keyword>
<keyword id="KW-1185">Reference proteome</keyword>
<organism>
    <name type="scientific">Drosophila melanogaster</name>
    <name type="common">Fruit fly</name>
    <dbReference type="NCBI Taxonomy" id="7227"/>
    <lineage>
        <taxon>Eukaryota</taxon>
        <taxon>Metazoa</taxon>
        <taxon>Ecdysozoa</taxon>
        <taxon>Arthropoda</taxon>
        <taxon>Hexapoda</taxon>
        <taxon>Insecta</taxon>
        <taxon>Pterygota</taxon>
        <taxon>Neoptera</taxon>
        <taxon>Endopterygota</taxon>
        <taxon>Diptera</taxon>
        <taxon>Brachycera</taxon>
        <taxon>Muscomorpha</taxon>
        <taxon>Ephydroidea</taxon>
        <taxon>Drosophilidae</taxon>
        <taxon>Drosophila</taxon>
        <taxon>Sophophora</taxon>
    </lineage>
</organism>
<accession>Q9VGQ9</accession>
<accession>Q4QPS1</accession>
<dbReference type="EMBL" id="AE014297">
    <property type="protein sequence ID" value="AAF54617.1"/>
    <property type="molecule type" value="Genomic_DNA"/>
</dbReference>
<dbReference type="EMBL" id="BT023695">
    <property type="protein sequence ID" value="AAY85095.1"/>
    <property type="molecule type" value="mRNA"/>
</dbReference>
<dbReference type="RefSeq" id="NP_650057.1">
    <property type="nucleotide sequence ID" value="NM_141800.2"/>
</dbReference>
<dbReference type="SMR" id="Q9VGQ9"/>
<dbReference type="FunCoup" id="Q9VGQ9">
    <property type="interactions" value="1787"/>
</dbReference>
<dbReference type="STRING" id="7227.FBpp0081829"/>
<dbReference type="PaxDb" id="7227-FBpp0081829"/>
<dbReference type="DNASU" id="41352"/>
<dbReference type="EnsemblMetazoa" id="FBtr0082353">
    <property type="protein sequence ID" value="FBpp0081829"/>
    <property type="gene ID" value="FBgn0037883"/>
</dbReference>
<dbReference type="GeneID" id="41352"/>
<dbReference type="KEGG" id="dme:Dmel_CG14701"/>
<dbReference type="UCSC" id="CG14701-RA">
    <property type="organism name" value="d. melanogaster"/>
</dbReference>
<dbReference type="AGR" id="FB:FBgn0037883"/>
<dbReference type="CTD" id="285381"/>
<dbReference type="FlyBase" id="FBgn0037883">
    <property type="gene designation" value="Dph3"/>
</dbReference>
<dbReference type="VEuPathDB" id="VectorBase:FBgn0037883"/>
<dbReference type="eggNOG" id="KOG2923">
    <property type="taxonomic scope" value="Eukaryota"/>
</dbReference>
<dbReference type="GeneTree" id="ENSGT00940000171548"/>
<dbReference type="HOGENOM" id="CLU_155991_3_0_1"/>
<dbReference type="InParanoid" id="Q9VGQ9"/>
<dbReference type="OMA" id="IYDPDMF"/>
<dbReference type="OrthoDB" id="66964at2759"/>
<dbReference type="PhylomeDB" id="Q9VGQ9"/>
<dbReference type="Reactome" id="R-DME-5358493">
    <property type="pathway name" value="Synthesis of diphthamide-EEF2"/>
</dbReference>
<dbReference type="UniPathway" id="UPA00559"/>
<dbReference type="BioGRID-ORCS" id="41352">
    <property type="hits" value="0 hits in 3 CRISPR screens"/>
</dbReference>
<dbReference type="GenomeRNAi" id="41352"/>
<dbReference type="PRO" id="PR:Q9VGQ9"/>
<dbReference type="Proteomes" id="UP000000803">
    <property type="component" value="Chromosome 3R"/>
</dbReference>
<dbReference type="Bgee" id="FBgn0037883">
    <property type="expression patterns" value="Expressed in adult Malpighian tubule (Drosophila) and 51 other cell types or tissues"/>
</dbReference>
<dbReference type="GO" id="GO:0005829">
    <property type="term" value="C:cytosol"/>
    <property type="evidence" value="ECO:0000250"/>
    <property type="project" value="FlyBase"/>
</dbReference>
<dbReference type="GO" id="GO:0005634">
    <property type="term" value="C:nucleus"/>
    <property type="evidence" value="ECO:0000250"/>
    <property type="project" value="FlyBase"/>
</dbReference>
<dbReference type="GO" id="GO:0008198">
    <property type="term" value="F:ferrous iron binding"/>
    <property type="evidence" value="ECO:0000250"/>
    <property type="project" value="UniProtKB"/>
</dbReference>
<dbReference type="GO" id="GO:0034986">
    <property type="term" value="F:iron chaperone activity"/>
    <property type="evidence" value="ECO:0000250"/>
    <property type="project" value="UniProtKB"/>
</dbReference>
<dbReference type="GO" id="GO:0016491">
    <property type="term" value="F:oxidoreductase activity"/>
    <property type="evidence" value="ECO:0007669"/>
    <property type="project" value="UniProtKB-KW"/>
</dbReference>
<dbReference type="GO" id="GO:0017183">
    <property type="term" value="P:protein histidyl modification to diphthamide"/>
    <property type="evidence" value="ECO:0000250"/>
    <property type="project" value="UniProtKB"/>
</dbReference>
<dbReference type="GO" id="GO:0002926">
    <property type="term" value="P:tRNA wobble base 5-methoxycarbonylmethyl-2-thiouridinylation"/>
    <property type="evidence" value="ECO:0000250"/>
    <property type="project" value="UniProtKB"/>
</dbReference>
<dbReference type="FunFam" id="3.10.660.10:FF:000001">
    <property type="entry name" value="Diphthamide biosynthesis 3"/>
    <property type="match status" value="1"/>
</dbReference>
<dbReference type="Gene3D" id="3.10.660.10">
    <property type="entry name" value="DPH Zinc finger"/>
    <property type="match status" value="1"/>
</dbReference>
<dbReference type="InterPro" id="IPR044248">
    <property type="entry name" value="DPH3/4-like"/>
</dbReference>
<dbReference type="InterPro" id="IPR007872">
    <property type="entry name" value="DPH_MB_dom"/>
</dbReference>
<dbReference type="InterPro" id="IPR036671">
    <property type="entry name" value="DPH_MB_sf"/>
</dbReference>
<dbReference type="PANTHER" id="PTHR21454:SF31">
    <property type="entry name" value="DIPHTHAMIDE BIOSYNTHESIS PROTEIN 3"/>
    <property type="match status" value="1"/>
</dbReference>
<dbReference type="PANTHER" id="PTHR21454">
    <property type="entry name" value="DPH3 HOMOLOG-RELATED"/>
    <property type="match status" value="1"/>
</dbReference>
<dbReference type="Pfam" id="PF05207">
    <property type="entry name" value="Zn_ribbon_CSL"/>
    <property type="match status" value="1"/>
</dbReference>
<dbReference type="SUPFAM" id="SSF144217">
    <property type="entry name" value="CSL zinc finger"/>
    <property type="match status" value="1"/>
</dbReference>
<dbReference type="PROSITE" id="PS51074">
    <property type="entry name" value="DPH_MB"/>
    <property type="match status" value="1"/>
</dbReference>
<evidence type="ECO:0000250" key="1">
    <source>
        <dbReference type="UniProtKB" id="Q3E840"/>
    </source>
</evidence>
<evidence type="ECO:0000255" key="2">
    <source>
        <dbReference type="PROSITE-ProRule" id="PRU00456"/>
    </source>
</evidence>
<evidence type="ECO:0000305" key="3"/>
<gene>
    <name evidence="3" type="primary">Dph3</name>
    <name type="ORF">CG14701</name>
</gene>
<comment type="function">
    <text evidence="1">Required for the first step of diphthamide biosynthesis, a post-translational modification of histidine which occurs in elongation factor 2. Dph1 and Dph2 transfer a 3-amino-3-carboxypropyl (ACP) group from S-adenosyl-L-methionine (SAM) to a histidine residue, the reaction is assisted by a reduction system comprising Dph3 and a NADH-dependent reductase. Acts as an electron donor to reduce the Fe-S cluster in Dph1-Dph2 keeping the [4Fe-4S] clusters in the active and reduced state. Restores iron to Dph1-Dph2 iron-sulfur clusters which have degraded from [4Fe-4S] to [3Fe-4S] by donating an iron atom to reform [4Fe-4S] clusters, in a manner dependent on the presence of elongation factor 2 and SAM. Associates with the elongator complex and is required for tRNA Wobble base modifications mediated by the elongator complex. The elongator complex is required for multiple tRNA modifications, including mcm5U (5-methoxycarbonylmethyl uridine), mcm5s 2U (5-methoxycarbonylmethyl-2-thiouridine), and ncm5U (5-carbamoylmethyl uridine).</text>
</comment>
<comment type="catalytic activity">
    <reaction evidence="1">
        <text>[3Fe-4S](1+)-[protein] + Fe(2+)-[Dph3] = [3Fe-4S](0)-[protein] + Fe(3+)-[Dph3]</text>
        <dbReference type="Rhea" id="RHEA:71235"/>
        <dbReference type="Rhea" id="RHEA-COMP:17996"/>
        <dbReference type="Rhea" id="RHEA-COMP:17997"/>
        <dbReference type="Rhea" id="RHEA-COMP:18002"/>
        <dbReference type="Rhea" id="RHEA-COMP:18003"/>
        <dbReference type="ChEBI" id="CHEBI:29033"/>
        <dbReference type="ChEBI" id="CHEBI:29034"/>
        <dbReference type="ChEBI" id="CHEBI:33751"/>
        <dbReference type="ChEBI" id="CHEBI:47402"/>
        <dbReference type="ChEBI" id="CHEBI:83228"/>
    </reaction>
</comment>
<comment type="catalytic activity">
    <reaction evidence="1">
        <text>2 [3Fe-4S](0)-[protein] + 2 Fe(2+)-[Dph3] + NADH = 2 [4Fe-4S](1+)-[protein] + 2 [Dph3] + NAD(+) + H(+)</text>
        <dbReference type="Rhea" id="RHEA:71239"/>
        <dbReference type="Rhea" id="RHEA-COMP:17997"/>
        <dbReference type="Rhea" id="RHEA-COMP:17998"/>
        <dbReference type="Rhea" id="RHEA-COMP:18001"/>
        <dbReference type="Rhea" id="RHEA-COMP:18002"/>
        <dbReference type="ChEBI" id="CHEBI:15378"/>
        <dbReference type="ChEBI" id="CHEBI:29033"/>
        <dbReference type="ChEBI" id="CHEBI:33723"/>
        <dbReference type="ChEBI" id="CHEBI:47402"/>
        <dbReference type="ChEBI" id="CHEBI:57540"/>
        <dbReference type="ChEBI" id="CHEBI:57945"/>
        <dbReference type="ChEBI" id="CHEBI:83228"/>
    </reaction>
</comment>
<comment type="cofactor">
    <cofactor evidence="1">
        <name>Fe(2+)</name>
        <dbReference type="ChEBI" id="CHEBI:29033"/>
    </cofactor>
</comment>
<comment type="pathway">
    <text evidence="3">Protein modification; peptidyl-diphthamide biosynthesis.</text>
</comment>
<comment type="subunit">
    <text evidence="1">Component of the 2-(3-amino-3-carboxypropyl)histidine synthase complex composed of Dph1, Dph2, Dph3 and a NADH-dependent reductase.</text>
</comment>
<comment type="domain">
    <text evidence="1">The DPH-type metal-binding (MB) domain can also bind zinc. However, iron is the physiological binding partner as zinc binding impairs the protein electron donor function.</text>
</comment>
<comment type="similarity">
    <text evidence="3">Belongs to the DPH3 family.</text>
</comment>
<name>DPH3_DROME</name>
<proteinExistence type="inferred from homology"/>